<dbReference type="EC" id="1.14.99.60" evidence="1"/>
<dbReference type="EMBL" id="CP000949">
    <property type="protein sequence ID" value="ACA75252.1"/>
    <property type="molecule type" value="Genomic_DNA"/>
</dbReference>
<dbReference type="SMR" id="B1JE29"/>
<dbReference type="STRING" id="390235.PputW619_4776"/>
<dbReference type="KEGG" id="ppw:PputW619_4776"/>
<dbReference type="eggNOG" id="COG2941">
    <property type="taxonomic scope" value="Bacteria"/>
</dbReference>
<dbReference type="HOGENOM" id="CLU_088601_0_0_6"/>
<dbReference type="OrthoDB" id="5192789at2"/>
<dbReference type="UniPathway" id="UPA00232"/>
<dbReference type="GO" id="GO:0005886">
    <property type="term" value="C:plasma membrane"/>
    <property type="evidence" value="ECO:0007669"/>
    <property type="project" value="UniProtKB-SubCell"/>
</dbReference>
<dbReference type="GO" id="GO:0008682">
    <property type="term" value="F:3-demethoxyubiquinol 3-hydroxylase activity"/>
    <property type="evidence" value="ECO:0007669"/>
    <property type="project" value="UniProtKB-EC"/>
</dbReference>
<dbReference type="GO" id="GO:0046872">
    <property type="term" value="F:metal ion binding"/>
    <property type="evidence" value="ECO:0007669"/>
    <property type="project" value="UniProtKB-KW"/>
</dbReference>
<dbReference type="GO" id="GO:0006744">
    <property type="term" value="P:ubiquinone biosynthetic process"/>
    <property type="evidence" value="ECO:0007669"/>
    <property type="project" value="UniProtKB-UniRule"/>
</dbReference>
<dbReference type="CDD" id="cd01042">
    <property type="entry name" value="DMQH"/>
    <property type="match status" value="1"/>
</dbReference>
<dbReference type="FunFam" id="1.20.1260.10:FF:000013">
    <property type="entry name" value="2-nonaprenyl-3-methyl-6-methoxy-1,4-benzoquinol hydroxylase"/>
    <property type="match status" value="1"/>
</dbReference>
<dbReference type="Gene3D" id="1.20.1260.10">
    <property type="match status" value="1"/>
</dbReference>
<dbReference type="HAMAP" id="MF_01658">
    <property type="entry name" value="COQ7"/>
    <property type="match status" value="1"/>
</dbReference>
<dbReference type="InterPro" id="IPR047809">
    <property type="entry name" value="COQ7_proteobact"/>
</dbReference>
<dbReference type="InterPro" id="IPR012347">
    <property type="entry name" value="Ferritin-like"/>
</dbReference>
<dbReference type="InterPro" id="IPR009078">
    <property type="entry name" value="Ferritin-like_SF"/>
</dbReference>
<dbReference type="InterPro" id="IPR011566">
    <property type="entry name" value="Ubq_synth_Coq7"/>
</dbReference>
<dbReference type="NCBIfam" id="NF033656">
    <property type="entry name" value="DMQ_monoox_COQ7"/>
    <property type="match status" value="1"/>
</dbReference>
<dbReference type="PANTHER" id="PTHR11237:SF4">
    <property type="entry name" value="5-DEMETHOXYUBIQUINONE HYDROXYLASE, MITOCHONDRIAL"/>
    <property type="match status" value="1"/>
</dbReference>
<dbReference type="PANTHER" id="PTHR11237">
    <property type="entry name" value="COENZYME Q10 BIOSYNTHESIS PROTEIN 7"/>
    <property type="match status" value="1"/>
</dbReference>
<dbReference type="Pfam" id="PF03232">
    <property type="entry name" value="COQ7"/>
    <property type="match status" value="1"/>
</dbReference>
<dbReference type="SUPFAM" id="SSF47240">
    <property type="entry name" value="Ferritin-like"/>
    <property type="match status" value="1"/>
</dbReference>
<feature type="chain" id="PRO_0000338717" description="3-demethoxyubiquinol 3-hydroxylase">
    <location>
        <begin position="1"/>
        <end position="215"/>
    </location>
</feature>
<feature type="binding site" evidence="1">
    <location>
        <position position="64"/>
    </location>
    <ligand>
        <name>Fe cation</name>
        <dbReference type="ChEBI" id="CHEBI:24875"/>
        <label>1</label>
    </ligand>
</feature>
<feature type="binding site" evidence="1">
    <location>
        <position position="94"/>
    </location>
    <ligand>
        <name>Fe cation</name>
        <dbReference type="ChEBI" id="CHEBI:24875"/>
        <label>1</label>
    </ligand>
</feature>
<feature type="binding site" evidence="1">
    <location>
        <position position="94"/>
    </location>
    <ligand>
        <name>Fe cation</name>
        <dbReference type="ChEBI" id="CHEBI:24875"/>
        <label>2</label>
    </ligand>
</feature>
<feature type="binding site" evidence="1">
    <location>
        <position position="97"/>
    </location>
    <ligand>
        <name>Fe cation</name>
        <dbReference type="ChEBI" id="CHEBI:24875"/>
        <label>1</label>
    </ligand>
</feature>
<feature type="binding site" evidence="1">
    <location>
        <position position="146"/>
    </location>
    <ligand>
        <name>Fe cation</name>
        <dbReference type="ChEBI" id="CHEBI:24875"/>
        <label>2</label>
    </ligand>
</feature>
<feature type="binding site" evidence="1">
    <location>
        <position position="178"/>
    </location>
    <ligand>
        <name>Fe cation</name>
        <dbReference type="ChEBI" id="CHEBI:24875"/>
        <label>1</label>
    </ligand>
</feature>
<feature type="binding site" evidence="1">
    <location>
        <position position="178"/>
    </location>
    <ligand>
        <name>Fe cation</name>
        <dbReference type="ChEBI" id="CHEBI:24875"/>
        <label>2</label>
    </ligand>
</feature>
<feature type="binding site" evidence="1">
    <location>
        <position position="181"/>
    </location>
    <ligand>
        <name>Fe cation</name>
        <dbReference type="ChEBI" id="CHEBI:24875"/>
        <label>2</label>
    </ligand>
</feature>
<name>COQ7_PSEPW</name>
<protein>
    <recommendedName>
        <fullName evidence="1">3-demethoxyubiquinol 3-hydroxylase</fullName>
        <shortName evidence="1">DMQ hydroxylase</shortName>
        <ecNumber evidence="1">1.14.99.60</ecNumber>
    </recommendedName>
    <alternativeName>
        <fullName evidence="1">2-nonaprenyl-3-methyl-6-methoxy-1,4-benzoquinol hydroxylase</fullName>
    </alternativeName>
</protein>
<keyword id="KW-1003">Cell membrane</keyword>
<keyword id="KW-0408">Iron</keyword>
<keyword id="KW-0472">Membrane</keyword>
<keyword id="KW-0479">Metal-binding</keyword>
<keyword id="KW-0503">Monooxygenase</keyword>
<keyword id="KW-0560">Oxidoreductase</keyword>
<keyword id="KW-0831">Ubiquinone biosynthesis</keyword>
<organism>
    <name type="scientific">Pseudomonas putida (strain W619)</name>
    <dbReference type="NCBI Taxonomy" id="390235"/>
    <lineage>
        <taxon>Bacteria</taxon>
        <taxon>Pseudomonadati</taxon>
        <taxon>Pseudomonadota</taxon>
        <taxon>Gammaproteobacteria</taxon>
        <taxon>Pseudomonadales</taxon>
        <taxon>Pseudomonadaceae</taxon>
        <taxon>Pseudomonas</taxon>
    </lineage>
</organism>
<gene>
    <name evidence="1" type="primary">coq7</name>
    <name type="ordered locus">PputW619_4776</name>
</gene>
<proteinExistence type="inferred from homology"/>
<accession>B1JE29</accession>
<sequence>MATERHYSPLDRLLLQADTAMRTLLPFSGQPSRPSPAIVQPDVELDESQTRHIAGLMRINHTGEVCAQALYQGQALTAKLPQVRKAMEHAAEEEIDHLAWCEQRIRQLGSHPSVLNPLFYGMSFGIGALAGMVSDKVSLGFVAATEHQVCKHLDEHLEQIPHEDEKSRAILEQMRVDEEQHADSALEAGGYRFPAPVRFGMSMLAKVMTKSTYRI</sequence>
<reference key="1">
    <citation type="submission" date="2008-02" db="EMBL/GenBank/DDBJ databases">
        <title>Complete sequence of Pseudomonas putida W619.</title>
        <authorList>
            <person name="Copeland A."/>
            <person name="Lucas S."/>
            <person name="Lapidus A."/>
            <person name="Barry K."/>
            <person name="Detter J.C."/>
            <person name="Glavina del Rio T."/>
            <person name="Dalin E."/>
            <person name="Tice H."/>
            <person name="Pitluck S."/>
            <person name="Chain P."/>
            <person name="Malfatti S."/>
            <person name="Shin M."/>
            <person name="Vergez L."/>
            <person name="Schmutz J."/>
            <person name="Larimer F."/>
            <person name="Land M."/>
            <person name="Hauser L."/>
            <person name="Kyrpides N."/>
            <person name="Kim E."/>
            <person name="Taghavi S."/>
            <person name="Vangronsveld D."/>
            <person name="van der Lelie D."/>
            <person name="Richardson P."/>
        </authorList>
    </citation>
    <scope>NUCLEOTIDE SEQUENCE [LARGE SCALE GENOMIC DNA]</scope>
    <source>
        <strain>W619</strain>
    </source>
</reference>
<evidence type="ECO:0000255" key="1">
    <source>
        <dbReference type="HAMAP-Rule" id="MF_01658"/>
    </source>
</evidence>
<comment type="function">
    <text evidence="1">Catalyzes the hydroxylation of 2-nonaprenyl-3-methyl-6-methoxy-1,4-benzoquinol during ubiquinone biosynthesis.</text>
</comment>
<comment type="catalytic activity">
    <reaction evidence="1">
        <text>a 5-methoxy-2-methyl-3-(all-trans-polyprenyl)benzene-1,4-diol + AH2 + O2 = a 3-demethylubiquinol + A + H2O</text>
        <dbReference type="Rhea" id="RHEA:50908"/>
        <dbReference type="Rhea" id="RHEA-COMP:10859"/>
        <dbReference type="Rhea" id="RHEA-COMP:10914"/>
        <dbReference type="ChEBI" id="CHEBI:13193"/>
        <dbReference type="ChEBI" id="CHEBI:15377"/>
        <dbReference type="ChEBI" id="CHEBI:15379"/>
        <dbReference type="ChEBI" id="CHEBI:17499"/>
        <dbReference type="ChEBI" id="CHEBI:84167"/>
        <dbReference type="ChEBI" id="CHEBI:84422"/>
        <dbReference type="EC" id="1.14.99.60"/>
    </reaction>
</comment>
<comment type="cofactor">
    <cofactor evidence="1">
        <name>Fe cation</name>
        <dbReference type="ChEBI" id="CHEBI:24875"/>
    </cofactor>
    <text evidence="1">Binds 2 iron ions per subunit.</text>
</comment>
<comment type="pathway">
    <text evidence="1">Cofactor biosynthesis; ubiquinone biosynthesis.</text>
</comment>
<comment type="subcellular location">
    <subcellularLocation>
        <location evidence="1">Cell membrane</location>
        <topology evidence="1">Peripheral membrane protein</topology>
    </subcellularLocation>
</comment>
<comment type="similarity">
    <text evidence="1">Belongs to the COQ7 family.</text>
</comment>